<gene>
    <name type="ordered locus">MJ0150</name>
</gene>
<dbReference type="EMBL" id="L77117">
    <property type="protein sequence ID" value="AAB98141.1"/>
    <property type="molecule type" value="Genomic_DNA"/>
</dbReference>
<dbReference type="PIR" id="G64318">
    <property type="entry name" value="G64318"/>
</dbReference>
<dbReference type="SMR" id="Q57614"/>
<dbReference type="STRING" id="243232.MJ_0150"/>
<dbReference type="PaxDb" id="243232-MJ_0150"/>
<dbReference type="EnsemblBacteria" id="AAB98141">
    <property type="protein sequence ID" value="AAB98141"/>
    <property type="gene ID" value="MJ_0150"/>
</dbReference>
<dbReference type="KEGG" id="mja:MJ_0150"/>
<dbReference type="eggNOG" id="arCOG01688">
    <property type="taxonomic scope" value="Archaea"/>
</dbReference>
<dbReference type="HOGENOM" id="CLU_128702_0_0_2"/>
<dbReference type="InParanoid" id="Q57614"/>
<dbReference type="PhylomeDB" id="Q57614"/>
<dbReference type="Proteomes" id="UP000000805">
    <property type="component" value="Chromosome"/>
</dbReference>
<dbReference type="Gene3D" id="3.30.1380.20">
    <property type="entry name" value="Trafficking protein particle complex subunit 3"/>
    <property type="match status" value="1"/>
</dbReference>
<dbReference type="InterPro" id="IPR024096">
    <property type="entry name" value="NO_sig/Golgi_transp_ligand-bd"/>
</dbReference>
<dbReference type="InterPro" id="IPR004096">
    <property type="entry name" value="V4R"/>
</dbReference>
<dbReference type="PANTHER" id="PTHR35090:SF2">
    <property type="entry name" value="ARSR FAMILY TRANSCRIPTIONAL REGULATOR"/>
    <property type="match status" value="1"/>
</dbReference>
<dbReference type="PANTHER" id="PTHR35090">
    <property type="entry name" value="DNA-DIRECTED RNA POLYMERASE SUBUNIT I"/>
    <property type="match status" value="1"/>
</dbReference>
<dbReference type="Pfam" id="PF02830">
    <property type="entry name" value="V4R"/>
    <property type="match status" value="1"/>
</dbReference>
<dbReference type="SMART" id="SM00989">
    <property type="entry name" value="V4R"/>
    <property type="match status" value="1"/>
</dbReference>
<dbReference type="SUPFAM" id="SSF111126">
    <property type="entry name" value="Ligand-binding domain in the NO signalling and Golgi transport"/>
    <property type="match status" value="1"/>
</dbReference>
<keyword id="KW-1185">Reference proteome</keyword>
<reference key="1">
    <citation type="journal article" date="1996" name="Science">
        <title>Complete genome sequence of the methanogenic archaeon, Methanococcus jannaschii.</title>
        <authorList>
            <person name="Bult C.J."/>
            <person name="White O."/>
            <person name="Olsen G.J."/>
            <person name="Zhou L."/>
            <person name="Fleischmann R.D."/>
            <person name="Sutton G.G."/>
            <person name="Blake J.A."/>
            <person name="FitzGerald L.M."/>
            <person name="Clayton R.A."/>
            <person name="Gocayne J.D."/>
            <person name="Kerlavage A.R."/>
            <person name="Dougherty B.A."/>
            <person name="Tomb J.-F."/>
            <person name="Adams M.D."/>
            <person name="Reich C.I."/>
            <person name="Overbeek R."/>
            <person name="Kirkness E.F."/>
            <person name="Weinstock K.G."/>
            <person name="Merrick J.M."/>
            <person name="Glodek A."/>
            <person name="Scott J.L."/>
            <person name="Geoghagen N.S.M."/>
            <person name="Weidman J.F."/>
            <person name="Fuhrmann J.L."/>
            <person name="Nguyen D."/>
            <person name="Utterback T.R."/>
            <person name="Kelley J.M."/>
            <person name="Peterson J.D."/>
            <person name="Sadow P.W."/>
            <person name="Hanna M.C."/>
            <person name="Cotton M.D."/>
            <person name="Roberts K.M."/>
            <person name="Hurst M.A."/>
            <person name="Kaine B.P."/>
            <person name="Borodovsky M."/>
            <person name="Klenk H.-P."/>
            <person name="Fraser C.M."/>
            <person name="Smith H.O."/>
            <person name="Woese C.R."/>
            <person name="Venter J.C."/>
        </authorList>
    </citation>
    <scope>NUCLEOTIDE SEQUENCE [LARGE SCALE GENOMIC DNA]</scope>
    <source>
        <strain>ATCC 43067 / DSM 2661 / JAL-1 / JCM 10045 / NBRC 100440</strain>
    </source>
</reference>
<evidence type="ECO:0000305" key="1"/>
<sequence>MGDVKMDKELLHKKIKKDIEDLINNHPPERTLGNLIPLSIFQAVRIGVLTAGCGIEAIIYNIGKDIGREVISRYVDRDNLLESFAEILKKAKIGILEVKKVEENEMILILKDCISCHNVPNVGTTLCHFEAGLIAGTLEKKLRRKVNAVETKCCGKGDEYCEFLVKIEDKLYW</sequence>
<accession>Q57614</accession>
<proteinExistence type="inferred from homology"/>
<feature type="chain" id="PRO_0000106720" description="Uncharacterized protein MJ0150">
    <location>
        <begin position="1"/>
        <end position="173"/>
    </location>
</feature>
<name>Y150_METJA</name>
<comment type="similarity">
    <text evidence="1">Belongs to the M.jannaschii MJ0150/MJ0739/MJ0745/MJ1460/MJ1642 family.</text>
</comment>
<protein>
    <recommendedName>
        <fullName>Uncharacterized protein MJ0150</fullName>
    </recommendedName>
</protein>
<organism>
    <name type="scientific">Methanocaldococcus jannaschii (strain ATCC 43067 / DSM 2661 / JAL-1 / JCM 10045 / NBRC 100440)</name>
    <name type="common">Methanococcus jannaschii</name>
    <dbReference type="NCBI Taxonomy" id="243232"/>
    <lineage>
        <taxon>Archaea</taxon>
        <taxon>Methanobacteriati</taxon>
        <taxon>Methanobacteriota</taxon>
        <taxon>Methanomada group</taxon>
        <taxon>Methanococci</taxon>
        <taxon>Methanococcales</taxon>
        <taxon>Methanocaldococcaceae</taxon>
        <taxon>Methanocaldococcus</taxon>
    </lineage>
</organism>